<accession>B2K8W1</accession>
<feature type="signal peptide" evidence="1">
    <location>
        <begin position="1"/>
        <end position="22"/>
    </location>
</feature>
<feature type="chain" id="PRO_5000345903" description="UPF0194 membrane protein YPTS_1292">
    <location>
        <begin position="23"/>
        <end position="328"/>
    </location>
</feature>
<feature type="coiled-coil region" evidence="1">
    <location>
        <begin position="80"/>
        <end position="109"/>
    </location>
</feature>
<feature type="coiled-coil region" evidence="1">
    <location>
        <begin position="142"/>
        <end position="209"/>
    </location>
</feature>
<reference key="1">
    <citation type="submission" date="2008-04" db="EMBL/GenBank/DDBJ databases">
        <title>Complete sequence of Yersinia pseudotuberculosis PB1/+.</title>
        <authorList>
            <person name="Copeland A."/>
            <person name="Lucas S."/>
            <person name="Lapidus A."/>
            <person name="Glavina del Rio T."/>
            <person name="Dalin E."/>
            <person name="Tice H."/>
            <person name="Bruce D."/>
            <person name="Goodwin L."/>
            <person name="Pitluck S."/>
            <person name="Munk A.C."/>
            <person name="Brettin T."/>
            <person name="Detter J.C."/>
            <person name="Han C."/>
            <person name="Tapia R."/>
            <person name="Schmutz J."/>
            <person name="Larimer F."/>
            <person name="Land M."/>
            <person name="Hauser L."/>
            <person name="Challacombe J.F."/>
            <person name="Green L."/>
            <person name="Lindler L.E."/>
            <person name="Nikolich M.P."/>
            <person name="Richardson P."/>
        </authorList>
    </citation>
    <scope>NUCLEOTIDE SEQUENCE [LARGE SCALE GENOMIC DNA]</scope>
    <source>
        <strain>PB1/+</strain>
    </source>
</reference>
<comment type="subcellular location">
    <subcellularLocation>
        <location evidence="1">Periplasm</location>
    </subcellularLocation>
</comment>
<comment type="similarity">
    <text evidence="1">Belongs to the UPF0194 family.</text>
</comment>
<sequence>MNRKKIIVAAVIVALLATLAYGWHYYRQQNDASLTLYGNVDIRTVNLGFRVAGRLASLAVDEGDDIHPGQTLGKLDDGPYLNALKQAQANVQSAQAQLALLKAGYREEEIAQVRSEVAQRQAAFDYADNFLKRQQGLWASKAVSANELENARTARNQARANLQAAKDKLAQFLSGNRPQEIAQAEANLAQTEAELAQAQLNLQDTILLAPSAGTVLTRAVEPGTILSASNTVFTVSLTDPVWVRAYVSERHLGQAIPGSEVEVFTDGRPDKPYHGKIGFVSPTAEFTPKTVETPDLRTDLVYRLRIIITDADESLRQGMPVTVRFPQR</sequence>
<gene>
    <name type="ordered locus">YPTS_1292</name>
</gene>
<organism>
    <name type="scientific">Yersinia pseudotuberculosis serotype IB (strain PB1/+)</name>
    <dbReference type="NCBI Taxonomy" id="502801"/>
    <lineage>
        <taxon>Bacteria</taxon>
        <taxon>Pseudomonadati</taxon>
        <taxon>Pseudomonadota</taxon>
        <taxon>Gammaproteobacteria</taxon>
        <taxon>Enterobacterales</taxon>
        <taxon>Yersiniaceae</taxon>
        <taxon>Yersinia</taxon>
    </lineage>
</organism>
<keyword id="KW-0175">Coiled coil</keyword>
<keyword id="KW-0574">Periplasm</keyword>
<keyword id="KW-0732">Signal</keyword>
<evidence type="ECO:0000255" key="1">
    <source>
        <dbReference type="HAMAP-Rule" id="MF_01304"/>
    </source>
</evidence>
<dbReference type="EMBL" id="CP001048">
    <property type="protein sequence ID" value="ACC88267.1"/>
    <property type="molecule type" value="Genomic_DNA"/>
</dbReference>
<dbReference type="SMR" id="B2K8W1"/>
<dbReference type="KEGG" id="ypb:YPTS_1292"/>
<dbReference type="PATRIC" id="fig|502801.10.peg.644"/>
<dbReference type="GO" id="GO:0042597">
    <property type="term" value="C:periplasmic space"/>
    <property type="evidence" value="ECO:0007669"/>
    <property type="project" value="UniProtKB-SubCell"/>
</dbReference>
<dbReference type="Gene3D" id="2.40.30.170">
    <property type="match status" value="1"/>
</dbReference>
<dbReference type="Gene3D" id="2.40.50.100">
    <property type="match status" value="1"/>
</dbReference>
<dbReference type="Gene3D" id="1.10.287.470">
    <property type="entry name" value="Helix hairpin bin"/>
    <property type="match status" value="1"/>
</dbReference>
<dbReference type="HAMAP" id="MF_01304">
    <property type="entry name" value="UPF0194"/>
    <property type="match status" value="1"/>
</dbReference>
<dbReference type="InterPro" id="IPR032317">
    <property type="entry name" value="CusB_D23"/>
</dbReference>
<dbReference type="InterPro" id="IPR022936">
    <property type="entry name" value="UPF0194_membrane_YbhG"/>
</dbReference>
<dbReference type="InterPro" id="IPR050465">
    <property type="entry name" value="UPF0194_transport"/>
</dbReference>
<dbReference type="NCBIfam" id="NF002939">
    <property type="entry name" value="PRK03598.1"/>
    <property type="match status" value="1"/>
</dbReference>
<dbReference type="PANTHER" id="PTHR32347">
    <property type="entry name" value="EFFLUX SYSTEM COMPONENT YKNX-RELATED"/>
    <property type="match status" value="1"/>
</dbReference>
<dbReference type="PANTHER" id="PTHR32347:SF29">
    <property type="entry name" value="UPF0194 MEMBRANE PROTEIN YBHG"/>
    <property type="match status" value="1"/>
</dbReference>
<dbReference type="Pfam" id="PF16576">
    <property type="entry name" value="HlyD_D23"/>
    <property type="match status" value="1"/>
</dbReference>
<dbReference type="SUPFAM" id="SSF111369">
    <property type="entry name" value="HlyD-like secretion proteins"/>
    <property type="match status" value="2"/>
</dbReference>
<protein>
    <recommendedName>
        <fullName evidence="1">UPF0194 membrane protein YPTS_1292</fullName>
    </recommendedName>
</protein>
<proteinExistence type="inferred from homology"/>
<name>Y1292_YERPB</name>